<name>VF108_ASFB7</name>
<keyword id="KW-0325">Glycoprotein</keyword>
<keyword id="KW-0426">Late protein</keyword>
<keyword id="KW-0472">Membrane</keyword>
<keyword id="KW-1185">Reference proteome</keyword>
<keyword id="KW-0812">Transmembrane</keyword>
<keyword id="KW-1133">Transmembrane helix</keyword>
<keyword id="KW-0946">Virion</keyword>
<proteinExistence type="evidence at transcript level"/>
<dbReference type="EMBL" id="U18466">
    <property type="protein sequence ID" value="AAA65346.1"/>
    <property type="molecule type" value="Genomic_DNA"/>
</dbReference>
<dbReference type="RefSeq" id="NP_042810.1">
    <property type="nucleotide sequence ID" value="NC_001659.2"/>
</dbReference>
<dbReference type="GeneID" id="22220347"/>
<dbReference type="KEGG" id="vg:22220347"/>
<dbReference type="Proteomes" id="UP000000624">
    <property type="component" value="Segment"/>
</dbReference>
<dbReference type="GO" id="GO:0016020">
    <property type="term" value="C:membrane"/>
    <property type="evidence" value="ECO:0007669"/>
    <property type="project" value="UniProtKB-KW"/>
</dbReference>
<dbReference type="GO" id="GO:0055036">
    <property type="term" value="C:virion membrane"/>
    <property type="evidence" value="ECO:0007669"/>
    <property type="project" value="UniProtKB-SubCell"/>
</dbReference>
<gene>
    <name type="ordered locus">Ba71V-117</name>
    <name type="ORF">H108R</name>
</gene>
<evidence type="ECO:0000255" key="1"/>
<evidence type="ECO:0000256" key="2">
    <source>
        <dbReference type="SAM" id="MobiDB-lite"/>
    </source>
</evidence>
<evidence type="ECO:0000269" key="3">
    <source>
    </source>
</evidence>
<evidence type="ECO:0000305" key="4"/>
<evidence type="ECO:0000305" key="5">
    <source>
    </source>
</evidence>
<reference key="1">
    <citation type="journal article" date="1995" name="Virology">
        <title>Analysis of the complete nucleotide sequence of African swine fever virus.</title>
        <authorList>
            <person name="Yanez R.J."/>
            <person name="Rodriguez J.M."/>
            <person name="Nogal M.L."/>
            <person name="Yuste L."/>
            <person name="Enriquez C."/>
            <person name="Rodriguez J.F."/>
            <person name="Vinuela E."/>
        </authorList>
    </citation>
    <scope>NUCLEOTIDE SEQUENCE [LARGE SCALE GENOMIC DNA]</scope>
</reference>
<reference key="2">
    <citation type="journal article" date="2018" name="J. Virol.">
        <title>A Proteomic Atlas of the African Swine Fever Virus Particle.</title>
        <authorList>
            <person name="Alejo A."/>
            <person name="Matamoros T."/>
            <person name="Guerra M."/>
            <person name="Andres G."/>
        </authorList>
    </citation>
    <scope>SUBCELLULAR LOCATION</scope>
</reference>
<reference key="3">
    <citation type="journal article" date="2020" name="J. Virol.">
        <title>The African Swine Fever Virus Transcriptome.</title>
        <authorList>
            <person name="Cackett G."/>
            <person name="Matelska D."/>
            <person name="Sykora M."/>
            <person name="Portugal R."/>
            <person name="Malecki M."/>
            <person name="Baehler J."/>
            <person name="Dixon L."/>
            <person name="Werner F."/>
        </authorList>
    </citation>
    <scope>INDUCTION</scope>
</reference>
<organism>
    <name type="scientific">African swine fever virus (strain Badajoz 1971 Vero-adapted)</name>
    <name type="common">Ba71V</name>
    <name type="synonym">ASFV</name>
    <dbReference type="NCBI Taxonomy" id="10498"/>
    <lineage>
        <taxon>Viruses</taxon>
        <taxon>Varidnaviria</taxon>
        <taxon>Bamfordvirae</taxon>
        <taxon>Nucleocytoviricota</taxon>
        <taxon>Pokkesviricetes</taxon>
        <taxon>Asfuvirales</taxon>
        <taxon>Asfarviridae</taxon>
        <taxon>Asfivirus</taxon>
        <taxon>African swine fever virus</taxon>
    </lineage>
</organism>
<accession>Q65188</accession>
<sequence length="108" mass="12542">MVNLFPVFTLIVIITILITTRELSTTMLIVSLVTDYIIINTQYTEQQHENNTFSMPQKNSFNESYNKDKKSNTHIPYQWLAPELKEAESKYWWGNYDPHSEPVLAGAS</sequence>
<protein>
    <recommendedName>
        <fullName evidence="4">Inner membrane protein H108R</fullName>
        <shortName>pH108R</shortName>
    </recommendedName>
</protein>
<organismHost>
    <name type="scientific">Ornithodoros</name>
    <name type="common">relapsing fever ticks</name>
    <dbReference type="NCBI Taxonomy" id="6937"/>
</organismHost>
<organismHost>
    <name type="scientific">Sus scrofa</name>
    <name type="common">Pig</name>
    <dbReference type="NCBI Taxonomy" id="9823"/>
</organismHost>
<feature type="chain" id="PRO_0000373470" description="Inner membrane protein H108R">
    <location>
        <begin position="1"/>
        <end position="108"/>
    </location>
</feature>
<feature type="transmembrane region" description="Helical" evidence="1">
    <location>
        <begin position="10"/>
        <end position="32"/>
    </location>
</feature>
<feature type="region of interest" description="Disordered" evidence="2">
    <location>
        <begin position="49"/>
        <end position="69"/>
    </location>
</feature>
<feature type="compositionally biased region" description="Polar residues" evidence="2">
    <location>
        <begin position="49"/>
        <end position="64"/>
    </location>
</feature>
<feature type="glycosylation site" description="N-linked (GlcNAc...) asparagine; by host" evidence="1">
    <location>
        <position position="50"/>
    </location>
</feature>
<feature type="glycosylation site" description="N-linked (GlcNAc...) asparagine; by host" evidence="1">
    <location>
        <position position="62"/>
    </location>
</feature>
<comment type="subcellular location">
    <subcellularLocation>
        <location evidence="5">Virion membrane</location>
        <topology evidence="4">Single-pass membrane protein</topology>
    </subcellularLocation>
    <text evidence="5">Probably part of the inner envelope.</text>
</comment>
<comment type="induction">
    <text evidence="3">Expressed in the late phase of the viral replicative cycle.</text>
</comment>
<comment type="similarity">
    <text evidence="4">Belongs to the asfivirus H108R family.</text>
</comment>